<dbReference type="EC" id="1.3.1.48" evidence="7"/>
<dbReference type="EC" id="1.3.1.74" evidence="7"/>
<dbReference type="EMBL" id="AK289597">
    <property type="protein sequence ID" value="BAF82286.1"/>
    <property type="molecule type" value="mRNA"/>
</dbReference>
<dbReference type="EMBL" id="AK298379">
    <property type="protein sequence ID" value="BAG60615.1"/>
    <property type="molecule type" value="mRNA"/>
</dbReference>
<dbReference type="EMBL" id="AL135787">
    <property type="status" value="NOT_ANNOTATED_CDS"/>
    <property type="molecule type" value="Genomic_DNA"/>
</dbReference>
<dbReference type="EMBL" id="AL159168">
    <property type="status" value="NOT_ANNOTATED_CDS"/>
    <property type="molecule type" value="Genomic_DNA"/>
</dbReference>
<dbReference type="EMBL" id="CH471105">
    <property type="protein sequence ID" value="EAW59074.1"/>
    <property type="molecule type" value="Genomic_DNA"/>
</dbReference>
<dbReference type="EMBL" id="BC035228">
    <property type="protein sequence ID" value="AAH35228.1"/>
    <property type="molecule type" value="mRNA"/>
</dbReference>
<dbReference type="EMBL" id="D49387">
    <property type="protein sequence ID" value="BAA08382.1"/>
    <property type="molecule type" value="mRNA"/>
</dbReference>
<dbReference type="CCDS" id="CCDS55331.1">
    <molecule id="Q14914-2"/>
</dbReference>
<dbReference type="CCDS" id="CCDS6779.1">
    <molecule id="Q14914-1"/>
</dbReference>
<dbReference type="RefSeq" id="NP_001139580.1">
    <molecule id="Q14914-1"/>
    <property type="nucleotide sequence ID" value="NM_001146108.2"/>
</dbReference>
<dbReference type="RefSeq" id="NP_001139581.1">
    <molecule id="Q14914-2"/>
    <property type="nucleotide sequence ID" value="NM_001146109.2"/>
</dbReference>
<dbReference type="RefSeq" id="NP_036344.2">
    <molecule id="Q14914-1"/>
    <property type="nucleotide sequence ID" value="NM_012212.3"/>
</dbReference>
<dbReference type="PDB" id="1ZSV">
    <property type="method" value="X-ray"/>
    <property type="resolution" value="2.30 A"/>
    <property type="chains" value="A/B/C/D=4-329"/>
</dbReference>
<dbReference type="PDB" id="2Y05">
    <property type="method" value="X-ray"/>
    <property type="resolution" value="2.20 A"/>
    <property type="chains" value="A/B/C/D=4-329"/>
</dbReference>
<dbReference type="PDBsum" id="1ZSV"/>
<dbReference type="PDBsum" id="2Y05"/>
<dbReference type="SMR" id="Q14914"/>
<dbReference type="BioGRID" id="116604">
    <property type="interactions" value="55"/>
</dbReference>
<dbReference type="FunCoup" id="Q14914">
    <property type="interactions" value="327"/>
</dbReference>
<dbReference type="IntAct" id="Q14914">
    <property type="interactions" value="8"/>
</dbReference>
<dbReference type="STRING" id="9606.ENSP00000385763"/>
<dbReference type="ChEMBL" id="CHEMBL4295822"/>
<dbReference type="DrugBank" id="DB07177">
    <property type="generic name" value="(5E,13E)-11-HYDROXY-9,15-DIOXOPROSTA-5,13-DIEN-1-OIC ACID"/>
</dbReference>
<dbReference type="DrugBank" id="DB05187">
    <property type="generic name" value="Elafibranor"/>
</dbReference>
<dbReference type="DrugBank" id="DB03461">
    <property type="generic name" value="Nicotinamide adenine dinucleotide phosphate"/>
</dbReference>
<dbReference type="DrugBank" id="DB04066">
    <property type="generic name" value="p-Coumaric acid"/>
</dbReference>
<dbReference type="SwissLipids" id="SLP:000001629"/>
<dbReference type="GlyGen" id="Q14914">
    <property type="glycosylation" value="1 site, 1 O-linked glycan (1 site)"/>
</dbReference>
<dbReference type="iPTMnet" id="Q14914"/>
<dbReference type="MetOSite" id="Q14914"/>
<dbReference type="PhosphoSitePlus" id="Q14914"/>
<dbReference type="SwissPalm" id="Q14914"/>
<dbReference type="BioMuta" id="PTGR1"/>
<dbReference type="DMDM" id="23503081"/>
<dbReference type="jPOST" id="Q14914"/>
<dbReference type="MassIVE" id="Q14914"/>
<dbReference type="PaxDb" id="9606-ENSP00000385763"/>
<dbReference type="PeptideAtlas" id="Q14914"/>
<dbReference type="ProteomicsDB" id="24627"/>
<dbReference type="ProteomicsDB" id="60217">
    <molecule id="Q14914-1"/>
</dbReference>
<dbReference type="Pumba" id="Q14914"/>
<dbReference type="TopDownProteomics" id="Q14914-1">
    <molecule id="Q14914-1"/>
</dbReference>
<dbReference type="Antibodypedia" id="29578">
    <property type="antibodies" value="215 antibodies from 29 providers"/>
</dbReference>
<dbReference type="DNASU" id="22949"/>
<dbReference type="Ensembl" id="ENST00000309195.9">
    <molecule id="Q14914-1"/>
    <property type="protein sequence ID" value="ENSP00000311572.5"/>
    <property type="gene ID" value="ENSG00000106853.20"/>
</dbReference>
<dbReference type="Ensembl" id="ENST00000407693.7">
    <molecule id="Q14914-1"/>
    <property type="protein sequence ID" value="ENSP00000385763.2"/>
    <property type="gene ID" value="ENSG00000106853.20"/>
</dbReference>
<dbReference type="Ensembl" id="ENST00000538962.7">
    <molecule id="Q14914-2"/>
    <property type="protein sequence ID" value="ENSP00000440281.1"/>
    <property type="gene ID" value="ENSG00000106853.20"/>
</dbReference>
<dbReference type="GeneID" id="22949"/>
<dbReference type="KEGG" id="hsa:22949"/>
<dbReference type="MANE-Select" id="ENST00000407693.7">
    <property type="protein sequence ID" value="ENSP00000385763.2"/>
    <property type="RefSeq nucleotide sequence ID" value="NM_001146108.2"/>
    <property type="RefSeq protein sequence ID" value="NP_001139580.1"/>
</dbReference>
<dbReference type="UCSC" id="uc004bfh.3">
    <molecule id="Q14914-1"/>
    <property type="organism name" value="human"/>
</dbReference>
<dbReference type="AGR" id="HGNC:18429"/>
<dbReference type="CTD" id="22949"/>
<dbReference type="DisGeNET" id="22949"/>
<dbReference type="GeneCards" id="PTGR1"/>
<dbReference type="HGNC" id="HGNC:18429">
    <property type="gene designation" value="PTGR1"/>
</dbReference>
<dbReference type="HPA" id="ENSG00000106853">
    <property type="expression patterns" value="Tissue enhanced (intestine, liver)"/>
</dbReference>
<dbReference type="MIM" id="601274">
    <property type="type" value="gene"/>
</dbReference>
<dbReference type="neXtProt" id="NX_Q14914"/>
<dbReference type="OpenTargets" id="ENSG00000106853"/>
<dbReference type="PharmGKB" id="PA162400322"/>
<dbReference type="VEuPathDB" id="HostDB:ENSG00000106853"/>
<dbReference type="eggNOG" id="KOG1196">
    <property type="taxonomic scope" value="Eukaryota"/>
</dbReference>
<dbReference type="GeneTree" id="ENSGT00940000154810"/>
<dbReference type="HOGENOM" id="CLU_026673_29_3_1"/>
<dbReference type="InParanoid" id="Q14914"/>
<dbReference type="OMA" id="YPIKNIH"/>
<dbReference type="OrthoDB" id="809632at2759"/>
<dbReference type="PAN-GO" id="Q14914">
    <property type="GO annotations" value="2 GO annotations based on evolutionary models"/>
</dbReference>
<dbReference type="PhylomeDB" id="Q14914"/>
<dbReference type="TreeFam" id="TF324201"/>
<dbReference type="PathwayCommons" id="Q14914"/>
<dbReference type="Reactome" id="R-HSA-2142691">
    <property type="pathway name" value="Synthesis of Leukotrienes (LT) and Eoxins (EX)"/>
</dbReference>
<dbReference type="Reactome" id="R-HSA-2142700">
    <property type="pathway name" value="Biosynthesis of Lipoxins (LX)"/>
</dbReference>
<dbReference type="SignaLink" id="Q14914"/>
<dbReference type="BioGRID-ORCS" id="22949">
    <property type="hits" value="14 hits in 1155 CRISPR screens"/>
</dbReference>
<dbReference type="ChiTaRS" id="PTGR1">
    <property type="organism name" value="human"/>
</dbReference>
<dbReference type="EvolutionaryTrace" id="Q14914"/>
<dbReference type="GenomeRNAi" id="22949"/>
<dbReference type="Pharos" id="Q14914">
    <property type="development level" value="Tbio"/>
</dbReference>
<dbReference type="PRO" id="PR:Q14914"/>
<dbReference type="Proteomes" id="UP000005640">
    <property type="component" value="Chromosome 9"/>
</dbReference>
<dbReference type="RNAct" id="Q14914">
    <property type="molecule type" value="protein"/>
</dbReference>
<dbReference type="Bgee" id="ENSG00000106853">
    <property type="expression patterns" value="Expressed in jejunal mucosa and 184 other cell types or tissues"/>
</dbReference>
<dbReference type="ExpressionAtlas" id="Q14914">
    <property type="expression patterns" value="baseline and differential"/>
</dbReference>
<dbReference type="GO" id="GO:0005737">
    <property type="term" value="C:cytoplasm"/>
    <property type="evidence" value="ECO:0000250"/>
    <property type="project" value="UniProtKB"/>
</dbReference>
<dbReference type="GO" id="GO:0070062">
    <property type="term" value="C:extracellular exosome"/>
    <property type="evidence" value="ECO:0007005"/>
    <property type="project" value="UniProtKB"/>
</dbReference>
<dbReference type="GO" id="GO:0036185">
    <property type="term" value="F:13-lipoxin reductase activity"/>
    <property type="evidence" value="ECO:0000250"/>
    <property type="project" value="UniProtKB"/>
</dbReference>
<dbReference type="GO" id="GO:0047522">
    <property type="term" value="F:15-oxoprostaglandin 13-oxidase [NAD(P)+] activity"/>
    <property type="evidence" value="ECO:0000314"/>
    <property type="project" value="UniProtKB"/>
</dbReference>
<dbReference type="GO" id="GO:0035798">
    <property type="term" value="F:2-alkenal reductase (NADPH) activity"/>
    <property type="evidence" value="ECO:0000314"/>
    <property type="project" value="UniProtKB"/>
</dbReference>
<dbReference type="GO" id="GO:0097257">
    <property type="term" value="F:leukotriene B4 12-hydroxy dehydrogenase activity"/>
    <property type="evidence" value="ECO:0000250"/>
    <property type="project" value="UniProtKB"/>
</dbReference>
<dbReference type="GO" id="GO:0036102">
    <property type="term" value="P:leukotriene B4 metabolic process"/>
    <property type="evidence" value="ECO:0000250"/>
    <property type="project" value="UniProtKB"/>
</dbReference>
<dbReference type="GO" id="GO:0006691">
    <property type="term" value="P:leukotriene metabolic process"/>
    <property type="evidence" value="ECO:0000303"/>
    <property type="project" value="UniProtKB"/>
</dbReference>
<dbReference type="GO" id="GO:2001302">
    <property type="term" value="P:lipoxin A4 metabolic process"/>
    <property type="evidence" value="ECO:0000250"/>
    <property type="project" value="UniProtKB"/>
</dbReference>
<dbReference type="GO" id="GO:0006693">
    <property type="term" value="P:prostaglandin metabolic process"/>
    <property type="evidence" value="ECO:0000314"/>
    <property type="project" value="UniProtKB"/>
</dbReference>
<dbReference type="CDD" id="cd08294">
    <property type="entry name" value="leukotriene_B4_DH_like"/>
    <property type="match status" value="1"/>
</dbReference>
<dbReference type="FunFam" id="3.40.50.720:FF:000121">
    <property type="entry name" value="Prostaglandin reductase 2"/>
    <property type="match status" value="1"/>
</dbReference>
<dbReference type="Gene3D" id="3.90.180.10">
    <property type="entry name" value="Medium-chain alcohol dehydrogenases, catalytic domain"/>
    <property type="match status" value="1"/>
</dbReference>
<dbReference type="Gene3D" id="3.40.50.720">
    <property type="entry name" value="NAD(P)-binding Rossmann-like Domain"/>
    <property type="match status" value="1"/>
</dbReference>
<dbReference type="InterPro" id="IPR013149">
    <property type="entry name" value="ADH-like_C"/>
</dbReference>
<dbReference type="InterPro" id="IPR041694">
    <property type="entry name" value="ADH_N_2"/>
</dbReference>
<dbReference type="InterPro" id="IPR011032">
    <property type="entry name" value="GroES-like_sf"/>
</dbReference>
<dbReference type="InterPro" id="IPR045010">
    <property type="entry name" value="MDR_fam"/>
</dbReference>
<dbReference type="InterPro" id="IPR036291">
    <property type="entry name" value="NAD(P)-bd_dom_sf"/>
</dbReference>
<dbReference type="InterPro" id="IPR020843">
    <property type="entry name" value="PKS_ER"/>
</dbReference>
<dbReference type="InterPro" id="IPR014190">
    <property type="entry name" value="PTGR1"/>
</dbReference>
<dbReference type="NCBIfam" id="TIGR02825">
    <property type="entry name" value="B4_12hDH"/>
    <property type="match status" value="1"/>
</dbReference>
<dbReference type="PANTHER" id="PTHR43205">
    <property type="entry name" value="PROSTAGLANDIN REDUCTASE"/>
    <property type="match status" value="1"/>
</dbReference>
<dbReference type="PANTHER" id="PTHR43205:SF33">
    <property type="entry name" value="PROSTAGLANDIN REDUCTASE 1"/>
    <property type="match status" value="1"/>
</dbReference>
<dbReference type="Pfam" id="PF16884">
    <property type="entry name" value="ADH_N_2"/>
    <property type="match status" value="1"/>
</dbReference>
<dbReference type="Pfam" id="PF00107">
    <property type="entry name" value="ADH_zinc_N"/>
    <property type="match status" value="1"/>
</dbReference>
<dbReference type="SMART" id="SM00829">
    <property type="entry name" value="PKS_ER"/>
    <property type="match status" value="1"/>
</dbReference>
<dbReference type="SUPFAM" id="SSF50129">
    <property type="entry name" value="GroES-like"/>
    <property type="match status" value="2"/>
</dbReference>
<dbReference type="SUPFAM" id="SSF51735">
    <property type="entry name" value="NAD(P)-binding Rossmann-fold domains"/>
    <property type="match status" value="1"/>
</dbReference>
<protein>
    <recommendedName>
        <fullName evidence="13">Prostaglandin reductase 1</fullName>
        <shortName evidence="13">PRG-1</shortName>
    </recommendedName>
    <alternativeName>
        <fullName evidence="2">15-oxoprostaglandin 13-reductase</fullName>
        <ecNumber evidence="7">1.3.1.48</ecNumber>
    </alternativeName>
    <alternativeName>
        <fullName evidence="1">Dithiolethione-inducible gene 1 protein</fullName>
        <shortName evidence="1">D3T-inducible gene 1 protein</shortName>
        <shortName evidence="1">DIG-1</shortName>
    </alternativeName>
    <alternativeName>
        <fullName evidence="13">Leukotriene B4 12-hydroxydehydrogenase</fullName>
    </alternativeName>
    <alternativeName>
        <fullName evidence="13">NAD(P)H-dependent alkenal/one oxidoreductase</fullName>
        <ecNumber evidence="7">1.3.1.74</ecNumber>
    </alternativeName>
</protein>
<accession>Q14914</accession>
<accession>A8K0N2</accession>
<accession>B4DPK3</accession>
<accession>F5GY50</accession>
<accession>Q8IYQ0</accession>
<accession>Q9H1X6</accession>
<gene>
    <name type="primary">PTGR1</name>
    <name type="synonym">LTB4DH</name>
</gene>
<sequence length="329" mass="35870">MVRTKTWTLKKHFVGYPTNSDFELKTAELPPLKNGEVLLEALFLTVDPYMRVAAKRLKEGDTMMGQQVAKVVESKNVALPKGTIVLASPGWTTHSISDGKDLEKLLTEWPDTIPLSLALGTVGMPGLTAYFGLLEICGVKGGETVMVNAAAGAVGSVVGQIAKLKGCKVVGAVGSDEKVAYLQKLGFDVVFNYKTVESLEETLKKASPDGYDCYFDNVGGEFSNTVIGQMKKFGRIAICGAISTYNRTGPLPPGPPPEIVIYQELRMEAFVVYRWQGDARQKALKDLLKWVLEGKIQYKEYIIEGFENMPAAFMGMLKGDNLGKTIVKA</sequence>
<reference key="1">
    <citation type="journal article" date="2004" name="Nat. Genet.">
        <title>Complete sequencing and characterization of 21,243 full-length human cDNAs.</title>
        <authorList>
            <person name="Ota T."/>
            <person name="Suzuki Y."/>
            <person name="Nishikawa T."/>
            <person name="Otsuki T."/>
            <person name="Sugiyama T."/>
            <person name="Irie R."/>
            <person name="Wakamatsu A."/>
            <person name="Hayashi K."/>
            <person name="Sato H."/>
            <person name="Nagai K."/>
            <person name="Kimura K."/>
            <person name="Makita H."/>
            <person name="Sekine M."/>
            <person name="Obayashi M."/>
            <person name="Nishi T."/>
            <person name="Shibahara T."/>
            <person name="Tanaka T."/>
            <person name="Ishii S."/>
            <person name="Yamamoto J."/>
            <person name="Saito K."/>
            <person name="Kawai Y."/>
            <person name="Isono Y."/>
            <person name="Nakamura Y."/>
            <person name="Nagahari K."/>
            <person name="Murakami K."/>
            <person name="Yasuda T."/>
            <person name="Iwayanagi T."/>
            <person name="Wagatsuma M."/>
            <person name="Shiratori A."/>
            <person name="Sudo H."/>
            <person name="Hosoiri T."/>
            <person name="Kaku Y."/>
            <person name="Kodaira H."/>
            <person name="Kondo H."/>
            <person name="Sugawara M."/>
            <person name="Takahashi M."/>
            <person name="Kanda K."/>
            <person name="Yokoi T."/>
            <person name="Furuya T."/>
            <person name="Kikkawa E."/>
            <person name="Omura Y."/>
            <person name="Abe K."/>
            <person name="Kamihara K."/>
            <person name="Katsuta N."/>
            <person name="Sato K."/>
            <person name="Tanikawa M."/>
            <person name="Yamazaki M."/>
            <person name="Ninomiya K."/>
            <person name="Ishibashi T."/>
            <person name="Yamashita H."/>
            <person name="Murakawa K."/>
            <person name="Fujimori K."/>
            <person name="Tanai H."/>
            <person name="Kimata M."/>
            <person name="Watanabe M."/>
            <person name="Hiraoka S."/>
            <person name="Chiba Y."/>
            <person name="Ishida S."/>
            <person name="Ono Y."/>
            <person name="Takiguchi S."/>
            <person name="Watanabe S."/>
            <person name="Yosida M."/>
            <person name="Hotuta T."/>
            <person name="Kusano J."/>
            <person name="Kanehori K."/>
            <person name="Takahashi-Fujii A."/>
            <person name="Hara H."/>
            <person name="Tanase T.-O."/>
            <person name="Nomura Y."/>
            <person name="Togiya S."/>
            <person name="Komai F."/>
            <person name="Hara R."/>
            <person name="Takeuchi K."/>
            <person name="Arita M."/>
            <person name="Imose N."/>
            <person name="Musashino K."/>
            <person name="Yuuki H."/>
            <person name="Oshima A."/>
            <person name="Sasaki N."/>
            <person name="Aotsuka S."/>
            <person name="Yoshikawa Y."/>
            <person name="Matsunawa H."/>
            <person name="Ichihara T."/>
            <person name="Shiohata N."/>
            <person name="Sano S."/>
            <person name="Moriya S."/>
            <person name="Momiyama H."/>
            <person name="Satoh N."/>
            <person name="Takami S."/>
            <person name="Terashima Y."/>
            <person name="Suzuki O."/>
            <person name="Nakagawa S."/>
            <person name="Senoh A."/>
            <person name="Mizoguchi H."/>
            <person name="Goto Y."/>
            <person name="Shimizu F."/>
            <person name="Wakebe H."/>
            <person name="Hishigaki H."/>
            <person name="Watanabe T."/>
            <person name="Sugiyama A."/>
            <person name="Takemoto M."/>
            <person name="Kawakami B."/>
            <person name="Yamazaki M."/>
            <person name="Watanabe K."/>
            <person name="Kumagai A."/>
            <person name="Itakura S."/>
            <person name="Fukuzumi Y."/>
            <person name="Fujimori Y."/>
            <person name="Komiyama M."/>
            <person name="Tashiro H."/>
            <person name="Tanigami A."/>
            <person name="Fujiwara T."/>
            <person name="Ono T."/>
            <person name="Yamada K."/>
            <person name="Fujii Y."/>
            <person name="Ozaki K."/>
            <person name="Hirao M."/>
            <person name="Ohmori Y."/>
            <person name="Kawabata A."/>
            <person name="Hikiji T."/>
            <person name="Kobatake N."/>
            <person name="Inagaki H."/>
            <person name="Ikema Y."/>
            <person name="Okamoto S."/>
            <person name="Okitani R."/>
            <person name="Kawakami T."/>
            <person name="Noguchi S."/>
            <person name="Itoh T."/>
            <person name="Shigeta K."/>
            <person name="Senba T."/>
            <person name="Matsumura K."/>
            <person name="Nakajima Y."/>
            <person name="Mizuno T."/>
            <person name="Morinaga M."/>
            <person name="Sasaki M."/>
            <person name="Togashi T."/>
            <person name="Oyama M."/>
            <person name="Hata H."/>
            <person name="Watanabe M."/>
            <person name="Komatsu T."/>
            <person name="Mizushima-Sugano J."/>
            <person name="Satoh T."/>
            <person name="Shirai Y."/>
            <person name="Takahashi Y."/>
            <person name="Nakagawa K."/>
            <person name="Okumura K."/>
            <person name="Nagase T."/>
            <person name="Nomura N."/>
            <person name="Kikuchi H."/>
            <person name="Masuho Y."/>
            <person name="Yamashita R."/>
            <person name="Nakai K."/>
            <person name="Yada T."/>
            <person name="Nakamura Y."/>
            <person name="Ohara O."/>
            <person name="Isogai T."/>
            <person name="Sugano S."/>
        </authorList>
    </citation>
    <scope>NUCLEOTIDE SEQUENCE [LARGE SCALE MRNA] (ISOFORMS 1 AND 2)</scope>
    <scope>VARIANT SER-27</scope>
    <source>
        <tissue>Brain cortex</tissue>
        <tissue>Kidney</tissue>
    </source>
</reference>
<reference key="2">
    <citation type="journal article" date="2004" name="Nature">
        <title>DNA sequence and analysis of human chromosome 9.</title>
        <authorList>
            <person name="Humphray S.J."/>
            <person name="Oliver K."/>
            <person name="Hunt A.R."/>
            <person name="Plumb R.W."/>
            <person name="Loveland J.E."/>
            <person name="Howe K.L."/>
            <person name="Andrews T.D."/>
            <person name="Searle S."/>
            <person name="Hunt S.E."/>
            <person name="Scott C.E."/>
            <person name="Jones M.C."/>
            <person name="Ainscough R."/>
            <person name="Almeida J.P."/>
            <person name="Ambrose K.D."/>
            <person name="Ashwell R.I.S."/>
            <person name="Babbage A.K."/>
            <person name="Babbage S."/>
            <person name="Bagguley C.L."/>
            <person name="Bailey J."/>
            <person name="Banerjee R."/>
            <person name="Barker D.J."/>
            <person name="Barlow K.F."/>
            <person name="Bates K."/>
            <person name="Beasley H."/>
            <person name="Beasley O."/>
            <person name="Bird C.P."/>
            <person name="Bray-Allen S."/>
            <person name="Brown A.J."/>
            <person name="Brown J.Y."/>
            <person name="Burford D."/>
            <person name="Burrill W."/>
            <person name="Burton J."/>
            <person name="Carder C."/>
            <person name="Carter N.P."/>
            <person name="Chapman J.C."/>
            <person name="Chen Y."/>
            <person name="Clarke G."/>
            <person name="Clark S.Y."/>
            <person name="Clee C.M."/>
            <person name="Clegg S."/>
            <person name="Collier R.E."/>
            <person name="Corby N."/>
            <person name="Crosier M."/>
            <person name="Cummings A.T."/>
            <person name="Davies J."/>
            <person name="Dhami P."/>
            <person name="Dunn M."/>
            <person name="Dutta I."/>
            <person name="Dyer L.W."/>
            <person name="Earthrowl M.E."/>
            <person name="Faulkner L."/>
            <person name="Fleming C.J."/>
            <person name="Frankish A."/>
            <person name="Frankland J.A."/>
            <person name="French L."/>
            <person name="Fricker D.G."/>
            <person name="Garner P."/>
            <person name="Garnett J."/>
            <person name="Ghori J."/>
            <person name="Gilbert J.G.R."/>
            <person name="Glison C."/>
            <person name="Grafham D.V."/>
            <person name="Gribble S."/>
            <person name="Griffiths C."/>
            <person name="Griffiths-Jones S."/>
            <person name="Grocock R."/>
            <person name="Guy J."/>
            <person name="Hall R.E."/>
            <person name="Hammond S."/>
            <person name="Harley J.L."/>
            <person name="Harrison E.S.I."/>
            <person name="Hart E.A."/>
            <person name="Heath P.D."/>
            <person name="Henderson C.D."/>
            <person name="Hopkins B.L."/>
            <person name="Howard P.J."/>
            <person name="Howden P.J."/>
            <person name="Huckle E."/>
            <person name="Johnson C."/>
            <person name="Johnson D."/>
            <person name="Joy A.A."/>
            <person name="Kay M."/>
            <person name="Keenan S."/>
            <person name="Kershaw J.K."/>
            <person name="Kimberley A.M."/>
            <person name="King A."/>
            <person name="Knights A."/>
            <person name="Laird G.K."/>
            <person name="Langford C."/>
            <person name="Lawlor S."/>
            <person name="Leongamornlert D.A."/>
            <person name="Leversha M."/>
            <person name="Lloyd C."/>
            <person name="Lloyd D.M."/>
            <person name="Lovell J."/>
            <person name="Martin S."/>
            <person name="Mashreghi-Mohammadi M."/>
            <person name="Matthews L."/>
            <person name="McLaren S."/>
            <person name="McLay K.E."/>
            <person name="McMurray A."/>
            <person name="Milne S."/>
            <person name="Nickerson T."/>
            <person name="Nisbett J."/>
            <person name="Nordsiek G."/>
            <person name="Pearce A.V."/>
            <person name="Peck A.I."/>
            <person name="Porter K.M."/>
            <person name="Pandian R."/>
            <person name="Pelan S."/>
            <person name="Phillimore B."/>
            <person name="Povey S."/>
            <person name="Ramsey Y."/>
            <person name="Rand V."/>
            <person name="Scharfe M."/>
            <person name="Sehra H.K."/>
            <person name="Shownkeen R."/>
            <person name="Sims S.K."/>
            <person name="Skuce C.D."/>
            <person name="Smith M."/>
            <person name="Steward C.A."/>
            <person name="Swarbreck D."/>
            <person name="Sycamore N."/>
            <person name="Tester J."/>
            <person name="Thorpe A."/>
            <person name="Tracey A."/>
            <person name="Tromans A."/>
            <person name="Thomas D.W."/>
            <person name="Wall M."/>
            <person name="Wallis J.M."/>
            <person name="West A.P."/>
            <person name="Whitehead S.L."/>
            <person name="Willey D.L."/>
            <person name="Williams S.A."/>
            <person name="Wilming L."/>
            <person name="Wray P.W."/>
            <person name="Young L."/>
            <person name="Ashurst J.L."/>
            <person name="Coulson A."/>
            <person name="Blocker H."/>
            <person name="Durbin R.M."/>
            <person name="Sulston J.E."/>
            <person name="Hubbard T."/>
            <person name="Jackson M.J."/>
            <person name="Bentley D.R."/>
            <person name="Beck S."/>
            <person name="Rogers J."/>
            <person name="Dunham I."/>
        </authorList>
    </citation>
    <scope>NUCLEOTIDE SEQUENCE [LARGE SCALE GENOMIC DNA]</scope>
</reference>
<reference key="3">
    <citation type="submission" date="2005-07" db="EMBL/GenBank/DDBJ databases">
        <authorList>
            <person name="Mural R.J."/>
            <person name="Istrail S."/>
            <person name="Sutton G.G."/>
            <person name="Florea L."/>
            <person name="Halpern A.L."/>
            <person name="Mobarry C.M."/>
            <person name="Lippert R."/>
            <person name="Walenz B."/>
            <person name="Shatkay H."/>
            <person name="Dew I."/>
            <person name="Miller J.R."/>
            <person name="Flanigan M.J."/>
            <person name="Edwards N.J."/>
            <person name="Bolanos R."/>
            <person name="Fasulo D."/>
            <person name="Halldorsson B.V."/>
            <person name="Hannenhalli S."/>
            <person name="Turner R."/>
            <person name="Yooseph S."/>
            <person name="Lu F."/>
            <person name="Nusskern D.R."/>
            <person name="Shue B.C."/>
            <person name="Zheng X.H."/>
            <person name="Zhong F."/>
            <person name="Delcher A.L."/>
            <person name="Huson D.H."/>
            <person name="Kravitz S.A."/>
            <person name="Mouchard L."/>
            <person name="Reinert K."/>
            <person name="Remington K.A."/>
            <person name="Clark A.G."/>
            <person name="Waterman M.S."/>
            <person name="Eichler E.E."/>
            <person name="Adams M.D."/>
            <person name="Hunkapiller M.W."/>
            <person name="Myers E.W."/>
            <person name="Venter J.C."/>
        </authorList>
    </citation>
    <scope>NUCLEOTIDE SEQUENCE [LARGE SCALE GENOMIC DNA]</scope>
    <scope>VARIANT SER-27</scope>
</reference>
<reference key="4">
    <citation type="journal article" date="2004" name="Genome Res.">
        <title>The status, quality, and expansion of the NIH full-length cDNA project: the Mammalian Gene Collection (MGC).</title>
        <authorList>
            <consortium name="The MGC Project Team"/>
        </authorList>
    </citation>
    <scope>NUCLEOTIDE SEQUENCE [LARGE SCALE MRNA] (ISOFORM 1)</scope>
    <scope>VARIANT SER-27</scope>
    <source>
        <tissue>Cervix</tissue>
    </source>
</reference>
<reference key="5">
    <citation type="journal article" date="1996" name="J. Biol. Chem.">
        <title>cDNA cloning, expression, and mutagenesis study of leukotriene B4 12-hydroxydehydrogenase.</title>
        <authorList>
            <person name="Yokomizo T."/>
            <person name="Ogawa Y."/>
            <person name="Uozumi N."/>
            <person name="Kume K."/>
            <person name="Izumi T."/>
            <person name="Shimizu T."/>
        </authorList>
    </citation>
    <scope>NUCLEOTIDE SEQUENCE [MRNA] OF 1-311 (ISOFORM 1)</scope>
    <scope>TISSUE SPECIFICITY</scope>
    <source>
        <tissue>Kidney</tissue>
    </source>
</reference>
<reference key="6">
    <citation type="journal article" date="2011" name="BMC Syst. Biol.">
        <title>Initial characterization of the human central proteome.</title>
        <authorList>
            <person name="Burkard T.R."/>
            <person name="Planyavsky M."/>
            <person name="Kaupe I."/>
            <person name="Breitwieser F.P."/>
            <person name="Buerckstuemmer T."/>
            <person name="Bennett K.L."/>
            <person name="Superti-Furga G."/>
            <person name="Colinge J."/>
        </authorList>
    </citation>
    <scope>IDENTIFICATION BY MASS SPECTROMETRY [LARGE SCALE ANALYSIS]</scope>
</reference>
<reference key="7">
    <citation type="journal article" date="2014" name="J. Proteomics">
        <title>An enzyme assisted RP-RPLC approach for in-depth analysis of human liver phosphoproteome.</title>
        <authorList>
            <person name="Bian Y."/>
            <person name="Song C."/>
            <person name="Cheng K."/>
            <person name="Dong M."/>
            <person name="Wang F."/>
            <person name="Huang J."/>
            <person name="Sun D."/>
            <person name="Wang L."/>
            <person name="Ye M."/>
            <person name="Zou H."/>
        </authorList>
    </citation>
    <scope>PHOSPHORYLATION [LARGE SCALE ANALYSIS] AT THR-18 AND SER-20</scope>
    <scope>IDENTIFICATION BY MASS SPECTROMETRY [LARGE SCALE ANALYSIS]</scope>
    <source>
        <tissue>Liver</tissue>
    </source>
</reference>
<reference key="8">
    <citation type="journal article" date="2015" name="Chem. Biol. Interact.">
        <title>Human prostaglandin reductase 1 (PGR1): Substrate specificity, inhibitor analysis and site-directed mutagenesis.</title>
        <authorList>
            <person name="Mesa J."/>
            <person name="Alsina C."/>
            <person name="Oppermann U."/>
            <person name="Pares X."/>
            <person name="Farres J."/>
            <person name="Porte S."/>
        </authorList>
    </citation>
    <scope>FUNCTION</scope>
    <scope>CATALYTIC ACTIVITY</scope>
    <scope>SUBSTRATE SPECIFICITY</scope>
    <scope>BIOPHYSICOCHEMICAL PROPERTIES</scope>
    <scope>MUTAGENESIS OF ARG-56 AND TYR-245</scope>
</reference>
<reference key="9">
    <citation type="journal article" date="2018" name="Cell Res.">
        <title>Landscape of the regulatory elements for lysine 2-hydroxyisobutyrylation pathway.</title>
        <authorList>
            <person name="Huang H."/>
            <person name="Luo Z."/>
            <person name="Qi S."/>
            <person name="Huang J."/>
            <person name="Xu P."/>
            <person name="Wang X."/>
            <person name="Gao L."/>
            <person name="Li F."/>
            <person name="Wang J."/>
            <person name="Zhao W."/>
            <person name="Gu W."/>
            <person name="Chen Z."/>
            <person name="Dai L."/>
            <person name="Dai J."/>
            <person name="Zhao Y."/>
        </authorList>
    </citation>
    <scope>HYDROXYBUTYRYLATION AT LYS-178</scope>
</reference>
<reference key="10">
    <citation type="submission" date="2005-05" db="PDB data bank">
        <title>Crystal structure of human NADP-dependent leukotriene B4 12-hydroxydehydrogenase.</title>
        <authorList>
            <consortium name="Structural genomics consortium (SGC)"/>
        </authorList>
    </citation>
    <scope>X-RAY CRYSTALLOGRAPHY (2.30 ANGSTROMS) OF 4-239</scope>
</reference>
<reference key="11">
    <citation type="submission" date="2011-01" db="PDB data bank">
        <title>Crystal structure of human leukotriene B4 12-hydroxydehydrogenase in complex with NADP and raloxifene.</title>
        <authorList>
            <consortium name="Structural genomics consortium (SGC)"/>
        </authorList>
    </citation>
    <scope>X-RAY CRYSTALLOGRAPHY (2.20 ANGSTROMS) OF 4-329 IN COMPLEX WITH NADP AND RALOXIFENE</scope>
</reference>
<name>PTGR1_HUMAN</name>
<comment type="function">
    <text evidence="1 2 7">NAD(P)H-dependent oxidoreductase involved in metabolic inactivation of pro- and anti-inflammatory eicosanoids: prostaglandins (PG), leukotrienes (LT) and lipoxins (LX) (PubMed:25619643). Catalyzes with high efficiency the reduction of the 13,14 double bond of 15-oxoPGs, including 15-oxo-PGE1, 15-oxo-PGE2, 15-oxo-PGF1-alpha and 15-oxo-PGF2-alpha (PubMed:25619643). Catalyzes with lower efficiency the oxidation of the hydroxyl group at C12 of LTB4 and its derivatives, converting them into biologically less active 12-oxo-LTB4 metabolites (By similarity) (PubMed:25619643). Reduces 15-oxo-LXA4 to 13,14 dihydro-15-oxo-LXA4, enhancing neutrophil recruitment at the inflammatory site (By similarity). May play a role in metabolic detoxification of alkenals and ketones. Reduces alpha,beta-unsaturated alkenals and ketones, particularly those with medium-chain length, showing highest affinity toward (2E)-decenal and (3E)-3-nonen-2-one (PubMed:25619643). May inactivate 4-hydroxy-2-nonenal, a cytotoxic lipid constituent of oxidized low-density lipoprotein particles (By similarity).</text>
</comment>
<comment type="catalytic activity">
    <reaction evidence="7">
        <text>13,14-dihydro-15-oxo-prostaglandin E1 + NADP(+) = 15-oxoprostaglandin E1 + NADPH + H(+)</text>
        <dbReference type="Rhea" id="RHEA:50584"/>
        <dbReference type="ChEBI" id="CHEBI:15378"/>
        <dbReference type="ChEBI" id="CHEBI:57401"/>
        <dbReference type="ChEBI" id="CHEBI:57783"/>
        <dbReference type="ChEBI" id="CHEBI:58349"/>
        <dbReference type="ChEBI" id="CHEBI:133408"/>
    </reaction>
    <physiologicalReaction direction="right-to-left" evidence="15">
        <dbReference type="Rhea" id="RHEA:50586"/>
    </physiologicalReaction>
</comment>
<comment type="catalytic activity">
    <reaction evidence="7">
        <text>13,14-dihydro-15-oxo-prostaglandin E2 + NADP(+) = 15-oxoprostaglandin E2 + NADPH + H(+)</text>
        <dbReference type="Rhea" id="RHEA:11912"/>
        <dbReference type="ChEBI" id="CHEBI:15378"/>
        <dbReference type="ChEBI" id="CHEBI:57400"/>
        <dbReference type="ChEBI" id="CHEBI:57402"/>
        <dbReference type="ChEBI" id="CHEBI:57783"/>
        <dbReference type="ChEBI" id="CHEBI:58349"/>
        <dbReference type="EC" id="1.3.1.48"/>
    </reaction>
    <physiologicalReaction direction="right-to-left" evidence="15">
        <dbReference type="Rhea" id="RHEA:11914"/>
    </physiologicalReaction>
</comment>
<comment type="catalytic activity">
    <reaction evidence="7">
        <text>13,14-dihydro-15-oxo-prostaglandin F1alpha + NADP(+) = 15-oxoprostaglandin F1alpha + NADPH + H(+)</text>
        <dbReference type="Rhea" id="RHEA:50592"/>
        <dbReference type="ChEBI" id="CHEBI:15378"/>
        <dbReference type="ChEBI" id="CHEBI:57783"/>
        <dbReference type="ChEBI" id="CHEBI:58349"/>
        <dbReference type="ChEBI" id="CHEBI:79072"/>
        <dbReference type="ChEBI" id="CHEBI:133411"/>
    </reaction>
    <physiologicalReaction direction="right-to-left" evidence="15">
        <dbReference type="Rhea" id="RHEA:50594"/>
    </physiologicalReaction>
</comment>
<comment type="catalytic activity">
    <reaction evidence="7">
        <text>13,14-dihydro-15-oxo-PGF2alpha + NADP(+) = 15-oxoprostaglandin F2alpha + NADPH + H(+)</text>
        <dbReference type="Rhea" id="RHEA:50588"/>
        <dbReference type="ChEBI" id="CHEBI:15378"/>
        <dbReference type="ChEBI" id="CHEBI:57783"/>
        <dbReference type="ChEBI" id="CHEBI:58349"/>
        <dbReference type="ChEBI" id="CHEBI:133374"/>
        <dbReference type="ChEBI" id="CHEBI:133409"/>
    </reaction>
    <physiologicalReaction direction="right-to-left" evidence="15">
        <dbReference type="Rhea" id="RHEA:50590"/>
    </physiologicalReaction>
</comment>
<comment type="catalytic activity">
    <reaction evidence="2 4">
        <text>leukotriene B4 + NADP(+) = 12-oxo-leukotriene B4 + NADPH + H(+)</text>
        <dbReference type="Rhea" id="RHEA:50608"/>
        <dbReference type="ChEBI" id="CHEBI:15378"/>
        <dbReference type="ChEBI" id="CHEBI:57461"/>
        <dbReference type="ChEBI" id="CHEBI:57783"/>
        <dbReference type="ChEBI" id="CHEBI:58349"/>
        <dbReference type="ChEBI" id="CHEBI:133309"/>
    </reaction>
    <physiologicalReaction direction="left-to-right" evidence="2 4">
        <dbReference type="Rhea" id="RHEA:50609"/>
    </physiologicalReaction>
</comment>
<comment type="catalytic activity">
    <reaction evidence="2">
        <text>20-hydroxy-leukotriene B4 + NADP(+) = 12-oxo-20-hydroxy-leukotriene B4 + NADPH + H(+)</text>
        <dbReference type="Rhea" id="RHEA:51208"/>
        <dbReference type="ChEBI" id="CHEBI:15378"/>
        <dbReference type="ChEBI" id="CHEBI:57460"/>
        <dbReference type="ChEBI" id="CHEBI:57783"/>
        <dbReference type="ChEBI" id="CHEBI:58349"/>
        <dbReference type="ChEBI" id="CHEBI:133346"/>
    </reaction>
    <physiologicalReaction direction="left-to-right" evidence="2">
        <dbReference type="Rhea" id="RHEA:51209"/>
    </physiologicalReaction>
</comment>
<comment type="catalytic activity">
    <reaction evidence="2">
        <text>6-trans-leukotriene B4 + NADP(+) = 12-oxo-(5S)-hydroxy-(6E,8E,10E,14Z)-eicosatetraenoate + NADPH + H(+)</text>
        <dbReference type="Rhea" id="RHEA:51204"/>
        <dbReference type="ChEBI" id="CHEBI:15378"/>
        <dbReference type="ChEBI" id="CHEBI:57783"/>
        <dbReference type="ChEBI" id="CHEBI:58349"/>
        <dbReference type="ChEBI" id="CHEBI:90723"/>
        <dbReference type="ChEBI" id="CHEBI:133974"/>
    </reaction>
    <physiologicalReaction direction="left-to-right" evidence="2">
        <dbReference type="Rhea" id="RHEA:51205"/>
    </physiologicalReaction>
</comment>
<comment type="catalytic activity">
    <reaction evidence="2">
        <text>(5S,12S)-dihydroxy-(6E,10E,12E,14Z)-eicosatetraenoate + NADP(+) = 12-oxo-(5S)-hydroxy-(6E,8E,10E,14Z)-eicosatetraenoate + NADPH + H(+)</text>
        <dbReference type="Rhea" id="RHEA:51212"/>
        <dbReference type="ChEBI" id="CHEBI:15378"/>
        <dbReference type="ChEBI" id="CHEBI:57783"/>
        <dbReference type="ChEBI" id="CHEBI:58349"/>
        <dbReference type="ChEBI" id="CHEBI:133974"/>
        <dbReference type="ChEBI" id="CHEBI:133975"/>
    </reaction>
    <physiologicalReaction direction="left-to-right" evidence="2">
        <dbReference type="Rhea" id="RHEA:51213"/>
    </physiologicalReaction>
</comment>
<comment type="catalytic activity">
    <reaction evidence="7">
        <text>an n-alkanal + NADP(+) = an alk-2-enal + NADPH + H(+)</text>
        <dbReference type="Rhea" id="RHEA:13737"/>
        <dbReference type="ChEBI" id="CHEBI:12834"/>
        <dbReference type="ChEBI" id="CHEBI:13757"/>
        <dbReference type="ChEBI" id="CHEBI:15378"/>
        <dbReference type="ChEBI" id="CHEBI:57783"/>
        <dbReference type="ChEBI" id="CHEBI:58349"/>
        <dbReference type="EC" id="1.3.1.74"/>
    </reaction>
    <physiologicalReaction direction="right-to-left" evidence="15">
        <dbReference type="Rhea" id="RHEA:13739"/>
    </physiologicalReaction>
</comment>
<comment type="catalytic activity">
    <reaction evidence="7">
        <text>hexanal + NADP(+) = (E)-hex-2-enal + NADPH + H(+)</text>
        <dbReference type="Rhea" id="RHEA:50776"/>
        <dbReference type="ChEBI" id="CHEBI:15378"/>
        <dbReference type="ChEBI" id="CHEBI:28913"/>
        <dbReference type="ChEBI" id="CHEBI:57783"/>
        <dbReference type="ChEBI" id="CHEBI:58349"/>
        <dbReference type="ChEBI" id="CHEBI:88528"/>
    </reaction>
    <physiologicalReaction direction="right-to-left" evidence="15">
        <dbReference type="Rhea" id="RHEA:50778"/>
    </physiologicalReaction>
</comment>
<comment type="catalytic activity">
    <reaction evidence="7">
        <text>octanal + NADP(+) = (2E)-octenal + NADPH + H(+)</text>
        <dbReference type="Rhea" id="RHEA:50780"/>
        <dbReference type="ChEBI" id="CHEBI:15378"/>
        <dbReference type="ChEBI" id="CHEBI:17935"/>
        <dbReference type="ChEBI" id="CHEBI:57783"/>
        <dbReference type="ChEBI" id="CHEBI:58349"/>
        <dbReference type="ChEBI" id="CHEBI:61748"/>
    </reaction>
    <physiologicalReaction direction="right-to-left" evidence="15">
        <dbReference type="Rhea" id="RHEA:50782"/>
    </physiologicalReaction>
</comment>
<comment type="catalytic activity">
    <reaction evidence="7">
        <text>decanal + NADP(+) = (2E)-decenal + NADPH + H(+)</text>
        <dbReference type="Rhea" id="RHEA:50612"/>
        <dbReference type="ChEBI" id="CHEBI:15378"/>
        <dbReference type="ChEBI" id="CHEBI:31457"/>
        <dbReference type="ChEBI" id="CHEBI:57783"/>
        <dbReference type="ChEBI" id="CHEBI:58349"/>
        <dbReference type="ChEBI" id="CHEBI:133455"/>
    </reaction>
    <physiologicalReaction direction="right-to-left" evidence="15">
        <dbReference type="Rhea" id="RHEA:50614"/>
    </physiologicalReaction>
</comment>
<comment type="catalytic activity">
    <reaction evidence="7">
        <text>dodecanal + NADP(+) = (2E)-dodecenal + NADPH + H(+)</text>
        <dbReference type="Rhea" id="RHEA:50784"/>
        <dbReference type="ChEBI" id="CHEBI:15378"/>
        <dbReference type="ChEBI" id="CHEBI:27836"/>
        <dbReference type="ChEBI" id="CHEBI:57783"/>
        <dbReference type="ChEBI" id="CHEBI:58349"/>
        <dbReference type="ChEBI" id="CHEBI:133741"/>
    </reaction>
    <physiologicalReaction direction="right-to-left" evidence="15">
        <dbReference type="Rhea" id="RHEA:50786"/>
    </physiologicalReaction>
</comment>
<comment type="catalytic activity">
    <reaction evidence="1">
        <text>4-hydroxynonanal + NADP(+) = (E)-4-hydroxynon-2-enal + NADPH + H(+)</text>
        <dbReference type="Rhea" id="RHEA:64736"/>
        <dbReference type="ChEBI" id="CHEBI:15378"/>
        <dbReference type="ChEBI" id="CHEBI:57783"/>
        <dbReference type="ChEBI" id="CHEBI:58349"/>
        <dbReference type="ChEBI" id="CHEBI:58968"/>
        <dbReference type="ChEBI" id="CHEBI:156112"/>
    </reaction>
    <physiologicalReaction direction="right-to-left" evidence="1">
        <dbReference type="Rhea" id="RHEA:64738"/>
    </physiologicalReaction>
</comment>
<comment type="catalytic activity">
    <reaction evidence="7">
        <text>pentan-2-one + NADP(+) = (E)-pent-3-en-2-one + NADPH + H(+)</text>
        <dbReference type="Rhea" id="RHEA:50788"/>
        <dbReference type="ChEBI" id="CHEBI:15378"/>
        <dbReference type="ChEBI" id="CHEBI:16472"/>
        <dbReference type="ChEBI" id="CHEBI:57783"/>
        <dbReference type="ChEBI" id="CHEBI:58349"/>
        <dbReference type="ChEBI" id="CHEBI:145276"/>
    </reaction>
    <physiologicalReaction direction="right-to-left" evidence="15">
        <dbReference type="Rhea" id="RHEA:50790"/>
    </physiologicalReaction>
</comment>
<comment type="catalytic activity">
    <reaction evidence="7">
        <text>nonan-2-one + NADP(+) = (3E)-nonen-2-one + NADPH + H(+)</text>
        <dbReference type="Rhea" id="RHEA:50616"/>
        <dbReference type="ChEBI" id="CHEBI:15378"/>
        <dbReference type="ChEBI" id="CHEBI:57783"/>
        <dbReference type="ChEBI" id="CHEBI:58349"/>
        <dbReference type="ChEBI" id="CHEBI:77927"/>
        <dbReference type="ChEBI" id="CHEBI:133457"/>
    </reaction>
    <physiologicalReaction direction="right-to-left" evidence="15">
        <dbReference type="Rhea" id="RHEA:50618"/>
    </physiologicalReaction>
</comment>
<comment type="biophysicochemical properties">
    <kinetics>
        <KM evidence="7">33 uM for (2E)-hexenal</KM>
        <KM evidence="7">14 uM for (2E)-octenal</KM>
        <KM evidence="7">6 uM for (2E)-decenal</KM>
        <KM evidence="7">12 uM for (2E)-dodecenal</KM>
        <KM evidence="7">12 uM for (3E)-3-buten-2-one</KM>
        <KM evidence="7">7.3 uM for (3E)-3-penten-2-one</KM>
        <KM evidence="7">6.5 uM for (3E)-3-nonen-2-one</KM>
        <KM evidence="7">1.4 uM for 15-oxoprostaglandin E1</KM>
        <KM evidence="7">0.6 uM for 15-oxoprostaglandin E2</KM>
        <KM evidence="7">1.1 uM for 15-oxoprostaglandin F1alpha</KM>
        <KM evidence="7">3.2 uM for 15-oxoprostaglandin F2alpha</KM>
        <KM evidence="7">5.2 uM for leukotriene B4</KM>
        <KM evidence="7">14 uM for NADPH</KM>
        <KM evidence="7">200 uM for NADH</KM>
    </kinetics>
</comment>
<comment type="subunit">
    <text evidence="4">Monomer or homodimer.</text>
</comment>
<comment type="interaction">
    <interactant intactId="EBI-2876800">
        <id>Q14914</id>
    </interactant>
    <interactant intactId="EBI-1055254">
        <id>Q8WXH2</id>
        <label>JPH3</label>
    </interactant>
    <organismsDiffer>false</organismsDiffer>
    <experiments>3</experiments>
</comment>
<comment type="subcellular location">
    <subcellularLocation>
        <location evidence="2">Cytoplasm</location>
    </subcellularLocation>
</comment>
<comment type="alternative products">
    <event type="alternative splicing"/>
    <isoform>
        <id>Q14914-1</id>
        <name>1</name>
        <sequence type="displayed"/>
    </isoform>
    <isoform>
        <id>Q14914-2</id>
        <name>2</name>
        <sequence type="described" ref="VSP_044652"/>
    </isoform>
</comment>
<comment type="tissue specificity">
    <text evidence="9">High expression in the kidney, liver, and intestine but not in leukocytes.</text>
</comment>
<comment type="similarity">
    <text evidence="14">Belongs to the NADP-dependent oxidoreductase L4BD family.</text>
</comment>
<evidence type="ECO:0000250" key="1">
    <source>
        <dbReference type="UniProtKB" id="P97584"/>
    </source>
</evidence>
<evidence type="ECO:0000250" key="2">
    <source>
        <dbReference type="UniProtKB" id="Q29073"/>
    </source>
</evidence>
<evidence type="ECO:0000250" key="3">
    <source>
        <dbReference type="UniProtKB" id="Q91YR9"/>
    </source>
</evidence>
<evidence type="ECO:0000250" key="4">
    <source>
        <dbReference type="UniProtKB" id="Q9EQZ5"/>
    </source>
</evidence>
<evidence type="ECO:0000269" key="5">
    <source>
    </source>
</evidence>
<evidence type="ECO:0000269" key="6">
    <source>
    </source>
</evidence>
<evidence type="ECO:0000269" key="7">
    <source>
    </source>
</evidence>
<evidence type="ECO:0000269" key="8">
    <source>
    </source>
</evidence>
<evidence type="ECO:0000269" key="9">
    <source>
    </source>
</evidence>
<evidence type="ECO:0000269" key="10">
    <source ref="11"/>
</evidence>
<evidence type="ECO:0000269" key="11">
    <source ref="3"/>
</evidence>
<evidence type="ECO:0000303" key="12">
    <source>
    </source>
</evidence>
<evidence type="ECO:0000303" key="13">
    <source>
    </source>
</evidence>
<evidence type="ECO:0000305" key="14"/>
<evidence type="ECO:0000305" key="15">
    <source>
    </source>
</evidence>
<evidence type="ECO:0007744" key="16">
    <source>
    </source>
</evidence>
<evidence type="ECO:0007829" key="17">
    <source>
        <dbReference type="PDB" id="2Y05"/>
    </source>
</evidence>
<proteinExistence type="evidence at protein level"/>
<feature type="chain" id="PRO_0000218065" description="Prostaglandin reductase 1">
    <location>
        <begin position="1"/>
        <end position="329"/>
    </location>
</feature>
<feature type="binding site" evidence="10">
    <location>
        <begin position="152"/>
        <end position="155"/>
    </location>
    <ligand>
        <name>NADP(+)</name>
        <dbReference type="ChEBI" id="CHEBI:58349"/>
    </ligand>
</feature>
<feature type="binding site" evidence="10">
    <location>
        <position position="178"/>
    </location>
    <ligand>
        <name>NADP(+)</name>
        <dbReference type="ChEBI" id="CHEBI:58349"/>
    </ligand>
</feature>
<feature type="binding site" evidence="10">
    <location>
        <position position="193"/>
    </location>
    <ligand>
        <name>NADP(+)</name>
        <dbReference type="ChEBI" id="CHEBI:58349"/>
    </ligand>
</feature>
<feature type="binding site" evidence="10">
    <location>
        <position position="217"/>
    </location>
    <ligand>
        <name>NADP(+)</name>
        <dbReference type="ChEBI" id="CHEBI:58349"/>
    </ligand>
</feature>
<feature type="binding site" evidence="10">
    <location>
        <begin position="239"/>
        <end position="245"/>
    </location>
    <ligand>
        <name>NADP(+)</name>
        <dbReference type="ChEBI" id="CHEBI:58349"/>
    </ligand>
</feature>
<feature type="binding site" evidence="10">
    <location>
        <begin position="270"/>
        <end position="272"/>
    </location>
    <ligand>
        <name>NADP(+)</name>
        <dbReference type="ChEBI" id="CHEBI:58349"/>
    </ligand>
</feature>
<feature type="binding site" evidence="10">
    <location>
        <position position="321"/>
    </location>
    <ligand>
        <name>NADP(+)</name>
        <dbReference type="ChEBI" id="CHEBI:58349"/>
    </ligand>
</feature>
<feature type="modified residue" description="Phosphothreonine" evidence="16">
    <location>
        <position position="18"/>
    </location>
</feature>
<feature type="modified residue" description="Phosphoserine" evidence="16">
    <location>
        <position position="20"/>
    </location>
</feature>
<feature type="modified residue" description="N6-(2-hydroxyisobutyryl)lysine; alternate" evidence="8">
    <location>
        <position position="178"/>
    </location>
</feature>
<feature type="modified residue" description="N6-acetyllysine; alternate" evidence="3">
    <location>
        <position position="178"/>
    </location>
</feature>
<feature type="splice variant" id="VSP_044652" description="In isoform 2." evidence="12">
    <original>GKIQYKEYIIEGFENMPAAFMGMLKGDNLGKTIVKA</original>
    <variation>IKRENEED</variation>
    <location>
        <begin position="294"/>
        <end position="329"/>
    </location>
</feature>
<feature type="sequence variant" id="VAR_023111" description="In dbSNP:rs1053959." evidence="5 6 11">
    <original>A</original>
    <variation>S</variation>
    <location>
        <position position="27"/>
    </location>
</feature>
<feature type="mutagenesis site" description="Markedly decreases the catalytic efficiency toward 15-oxoprostaglandin E2." evidence="7">
    <original>R</original>
    <variation>A</variation>
    <location>
        <position position="56"/>
    </location>
</feature>
<feature type="mutagenesis site" description="Markedly decreases the catalytic efficiency toward 15-oxoprostaglandin E2 and (3E)-3-nonen-2-one." evidence="7">
    <original>Y</original>
    <variation>A</variation>
    <variation>F</variation>
    <location>
        <position position="245"/>
    </location>
</feature>
<feature type="sequence conflict" description="In Ref. 5; BAA08382." evidence="14" ref="5">
    <original>A</original>
    <variation>R</variation>
    <location>
        <position position="311"/>
    </location>
</feature>
<feature type="strand" evidence="17">
    <location>
        <begin position="4"/>
        <end position="11"/>
    </location>
</feature>
<feature type="strand" evidence="17">
    <location>
        <begin position="14"/>
        <end position="16"/>
    </location>
</feature>
<feature type="helix" evidence="17">
    <location>
        <begin position="19"/>
        <end position="21"/>
    </location>
</feature>
<feature type="strand" evidence="17">
    <location>
        <begin position="22"/>
        <end position="28"/>
    </location>
</feature>
<feature type="strand" evidence="17">
    <location>
        <begin position="37"/>
        <end position="45"/>
    </location>
</feature>
<feature type="helix" evidence="17">
    <location>
        <begin position="49"/>
        <end position="53"/>
    </location>
</feature>
<feature type="helix" evidence="17">
    <location>
        <begin position="54"/>
        <end position="56"/>
    </location>
</feature>
<feature type="strand" evidence="17">
    <location>
        <begin position="67"/>
        <end position="75"/>
    </location>
</feature>
<feature type="strand" evidence="17">
    <location>
        <begin position="84"/>
        <end position="87"/>
    </location>
</feature>
<feature type="strand" evidence="17">
    <location>
        <begin position="91"/>
        <end position="97"/>
    </location>
</feature>
<feature type="helix" evidence="17">
    <location>
        <begin position="115"/>
        <end position="119"/>
    </location>
</feature>
<feature type="turn" evidence="17">
    <location>
        <begin position="120"/>
        <end position="122"/>
    </location>
</feature>
<feature type="helix" evidence="17">
    <location>
        <begin position="124"/>
        <end position="134"/>
    </location>
</feature>
<feature type="strand" evidence="17">
    <location>
        <begin position="144"/>
        <end position="149"/>
    </location>
</feature>
<feature type="helix" evidence="17">
    <location>
        <begin position="153"/>
        <end position="164"/>
    </location>
</feature>
<feature type="strand" evidence="17">
    <location>
        <begin position="168"/>
        <end position="175"/>
    </location>
</feature>
<feature type="helix" evidence="17">
    <location>
        <begin position="176"/>
        <end position="185"/>
    </location>
</feature>
<feature type="strand" evidence="17">
    <location>
        <begin position="188"/>
        <end position="192"/>
    </location>
</feature>
<feature type="turn" evidence="17">
    <location>
        <begin position="193"/>
        <end position="195"/>
    </location>
</feature>
<feature type="helix" evidence="17">
    <location>
        <begin position="199"/>
        <end position="206"/>
    </location>
</feature>
<feature type="strand" evidence="17">
    <location>
        <begin position="211"/>
        <end position="218"/>
    </location>
</feature>
<feature type="helix" evidence="17">
    <location>
        <begin position="220"/>
        <end position="227"/>
    </location>
</feature>
<feature type="strand" evidence="17">
    <location>
        <begin position="230"/>
        <end position="238"/>
    </location>
</feature>
<feature type="helix" evidence="17">
    <location>
        <begin position="242"/>
        <end position="245"/>
    </location>
</feature>
<feature type="helix" evidence="17">
    <location>
        <begin position="257"/>
        <end position="262"/>
    </location>
</feature>
<feature type="strand" evidence="17">
    <location>
        <begin position="266"/>
        <end position="269"/>
    </location>
</feature>
<feature type="helix" evidence="17">
    <location>
        <begin position="272"/>
        <end position="274"/>
    </location>
</feature>
<feature type="helix" evidence="17">
    <location>
        <begin position="277"/>
        <end position="292"/>
    </location>
</feature>
<feature type="strand" evidence="17">
    <location>
        <begin position="300"/>
        <end position="304"/>
    </location>
</feature>
<feature type="helix" evidence="17">
    <location>
        <begin position="306"/>
        <end position="308"/>
    </location>
</feature>
<feature type="helix" evidence="17">
    <location>
        <begin position="309"/>
        <end position="317"/>
    </location>
</feature>
<feature type="strand" evidence="17">
    <location>
        <begin position="322"/>
        <end position="328"/>
    </location>
</feature>
<organism>
    <name type="scientific">Homo sapiens</name>
    <name type="common">Human</name>
    <dbReference type="NCBI Taxonomy" id="9606"/>
    <lineage>
        <taxon>Eukaryota</taxon>
        <taxon>Metazoa</taxon>
        <taxon>Chordata</taxon>
        <taxon>Craniata</taxon>
        <taxon>Vertebrata</taxon>
        <taxon>Euteleostomi</taxon>
        <taxon>Mammalia</taxon>
        <taxon>Eutheria</taxon>
        <taxon>Euarchontoglires</taxon>
        <taxon>Primates</taxon>
        <taxon>Haplorrhini</taxon>
        <taxon>Catarrhini</taxon>
        <taxon>Hominidae</taxon>
        <taxon>Homo</taxon>
    </lineage>
</organism>
<keyword id="KW-0002">3D-structure</keyword>
<keyword id="KW-0007">Acetylation</keyword>
<keyword id="KW-0025">Alternative splicing</keyword>
<keyword id="KW-0963">Cytoplasm</keyword>
<keyword id="KW-0276">Fatty acid metabolism</keyword>
<keyword id="KW-0379">Hydroxylation</keyword>
<keyword id="KW-0443">Lipid metabolism</keyword>
<keyword id="KW-0521">NADP</keyword>
<keyword id="KW-0560">Oxidoreductase</keyword>
<keyword id="KW-0597">Phosphoprotein</keyword>
<keyword id="KW-0644">Prostaglandin metabolism</keyword>
<keyword id="KW-1267">Proteomics identification</keyword>
<keyword id="KW-1185">Reference proteome</keyword>